<sequence>MSNPSAPPPYEDRNPLYPGPPPPGGYGQPSVLPGGYPAYPGYPQPGYGHPAGYPQPMPPTHPMPMNYGPGHGYDGEERAVSDSFGPGEWDDRKVRHTFIRKVYSIISVQLLITVAIIAIFTFVEPVSAFVRRNVAVYYVSYAVFVVTYLILACCQGPRRRFPWNIILLTLFTFAMGFMTGTISSMYQTKAVIIAMIITAVVSISVTIFCFQTKVDFTSCTGLFCVLGIVLLVTGIVTSIVLYFQYVYWLHMLYAALGAICFTLFLAYDTQLVLGNRKHTISPEDYITGALQIYTDIIYIFTFVLQLMGDRN</sequence>
<protein>
    <recommendedName>
        <fullName>Protein lifeguard 3</fullName>
    </recommendedName>
    <alternativeName>
        <fullName>Protein RECS1 homolog</fullName>
    </alternativeName>
    <alternativeName>
        <fullName>Transmembrane BAX inhibitor motif-containing protein 1</fullName>
    </alternativeName>
</protein>
<name>LFG3_HUMAN</name>
<accession>Q969X1</accession>
<accession>B3KQY6</accession>
<accession>Q8N1R3</accession>
<accession>Q8TAM3</accession>
<accession>Q96K13</accession>
<dbReference type="EMBL" id="AK027755">
    <property type="protein sequence ID" value="BAB55346.1"/>
    <property type="status" value="ALT_INIT"/>
    <property type="molecule type" value="mRNA"/>
</dbReference>
<dbReference type="EMBL" id="AK090618">
    <property type="protein sequence ID" value="BAG52198.1"/>
    <property type="molecule type" value="mRNA"/>
</dbReference>
<dbReference type="EMBL" id="AK095270">
    <property type="protein sequence ID" value="BAC04516.1"/>
    <property type="status" value="ALT_SEQ"/>
    <property type="molecule type" value="mRNA"/>
</dbReference>
<dbReference type="EMBL" id="AF193045">
    <property type="protein sequence ID" value="AAG22473.1"/>
    <property type="molecule type" value="mRNA"/>
</dbReference>
<dbReference type="EMBL" id="AK075465">
    <property type="protein sequence ID" value="BAC11636.1"/>
    <property type="status" value="ALT_INIT"/>
    <property type="molecule type" value="mRNA"/>
</dbReference>
<dbReference type="EMBL" id="CH471063">
    <property type="protein sequence ID" value="EAW70607.1"/>
    <property type="molecule type" value="Genomic_DNA"/>
</dbReference>
<dbReference type="EMBL" id="BC007980">
    <property type="protein sequence ID" value="AAH07980.1"/>
    <property type="molecule type" value="mRNA"/>
</dbReference>
<dbReference type="EMBL" id="BC013428">
    <property type="protein sequence ID" value="AAH13428.1"/>
    <property type="molecule type" value="mRNA"/>
</dbReference>
<dbReference type="EMBL" id="BC026348">
    <property type="protein sequence ID" value="AAH26348.1"/>
    <property type="molecule type" value="mRNA"/>
</dbReference>
<dbReference type="EMBL" id="BC026693">
    <property type="protein sequence ID" value="AAH26693.1"/>
    <property type="status" value="ALT_FRAME"/>
    <property type="molecule type" value="mRNA"/>
</dbReference>
<dbReference type="CCDS" id="CCDS2412.1"/>
<dbReference type="RefSeq" id="NP_001308356.1">
    <property type="nucleotide sequence ID" value="NM_001321427.2"/>
</dbReference>
<dbReference type="RefSeq" id="NP_001308357.1">
    <property type="nucleotide sequence ID" value="NM_001321428.2"/>
</dbReference>
<dbReference type="RefSeq" id="NP_001308358.1">
    <property type="nucleotide sequence ID" value="NM_001321429.2"/>
</dbReference>
<dbReference type="RefSeq" id="NP_001308359.1">
    <property type="nucleotide sequence ID" value="NM_001321430.2"/>
</dbReference>
<dbReference type="RefSeq" id="NP_001308361.1">
    <property type="nucleotide sequence ID" value="NM_001321432.2"/>
</dbReference>
<dbReference type="RefSeq" id="NP_001308362.1">
    <property type="nucleotide sequence ID" value="NM_001321433.2"/>
</dbReference>
<dbReference type="RefSeq" id="NP_001308364.1">
    <property type="nucleotide sequence ID" value="NM_001321435.2"/>
</dbReference>
<dbReference type="RefSeq" id="NP_001308365.1">
    <property type="nucleotide sequence ID" value="NM_001321436.2"/>
</dbReference>
<dbReference type="RefSeq" id="NP_071435.2">
    <property type="nucleotide sequence ID" value="NM_022152.6"/>
</dbReference>
<dbReference type="RefSeq" id="XP_011509929.1">
    <property type="nucleotide sequence ID" value="XM_011511627.1"/>
</dbReference>
<dbReference type="SMR" id="Q969X1"/>
<dbReference type="BioGRID" id="122070">
    <property type="interactions" value="22"/>
</dbReference>
<dbReference type="FunCoup" id="Q969X1">
    <property type="interactions" value="240"/>
</dbReference>
<dbReference type="IntAct" id="Q969X1">
    <property type="interactions" value="18"/>
</dbReference>
<dbReference type="MINT" id="Q969X1"/>
<dbReference type="STRING" id="9606.ENSP00000409738"/>
<dbReference type="TCDB" id="1.A.14.3.10">
    <property type="family name" value="the calcium transporter a (cata) family (formerly the testis-enhanced gene transfer (tegt) family)"/>
</dbReference>
<dbReference type="iPTMnet" id="Q969X1"/>
<dbReference type="PhosphoSitePlus" id="Q969X1"/>
<dbReference type="SwissPalm" id="Q969X1"/>
<dbReference type="BioMuta" id="TMBIM1"/>
<dbReference type="DMDM" id="93117549"/>
<dbReference type="jPOST" id="Q969X1"/>
<dbReference type="MassIVE" id="Q969X1"/>
<dbReference type="PaxDb" id="9606-ENSP00000409738"/>
<dbReference type="PeptideAtlas" id="Q969X1"/>
<dbReference type="ProteomicsDB" id="75867"/>
<dbReference type="Pumba" id="Q969X1"/>
<dbReference type="Antibodypedia" id="2868">
    <property type="antibodies" value="183 antibodies from 27 providers"/>
</dbReference>
<dbReference type="DNASU" id="64114"/>
<dbReference type="Ensembl" id="ENST00000258412.8">
    <property type="protein sequence ID" value="ENSP00000258412.3"/>
    <property type="gene ID" value="ENSG00000135926.15"/>
</dbReference>
<dbReference type="Ensembl" id="ENST00000396809.6">
    <property type="protein sequence ID" value="ENSP00000380025.2"/>
    <property type="gene ID" value="ENSG00000135926.15"/>
</dbReference>
<dbReference type="Ensembl" id="ENST00000444881.5">
    <property type="protein sequence ID" value="ENSP00000409738.1"/>
    <property type="gene ID" value="ENSG00000135926.15"/>
</dbReference>
<dbReference type="GeneID" id="64114"/>
<dbReference type="KEGG" id="hsa:64114"/>
<dbReference type="MANE-Select" id="ENST00000258412.8">
    <property type="protein sequence ID" value="ENSP00000258412.3"/>
    <property type="RefSeq nucleotide sequence ID" value="NM_022152.6"/>
    <property type="RefSeq protein sequence ID" value="NP_071435.2"/>
</dbReference>
<dbReference type="UCSC" id="uc002vho.2">
    <property type="organism name" value="human"/>
</dbReference>
<dbReference type="AGR" id="HGNC:23410"/>
<dbReference type="CTD" id="64114"/>
<dbReference type="DisGeNET" id="64114"/>
<dbReference type="GeneCards" id="TMBIM1"/>
<dbReference type="HGNC" id="HGNC:23410">
    <property type="gene designation" value="TMBIM1"/>
</dbReference>
<dbReference type="HPA" id="ENSG00000135926">
    <property type="expression patterns" value="Low tissue specificity"/>
</dbReference>
<dbReference type="MIM" id="610364">
    <property type="type" value="gene"/>
</dbReference>
<dbReference type="neXtProt" id="NX_Q969X1"/>
<dbReference type="OpenTargets" id="ENSG00000135926"/>
<dbReference type="PharmGKB" id="PA142670804"/>
<dbReference type="VEuPathDB" id="HostDB:ENSG00000135926"/>
<dbReference type="eggNOG" id="KOG2322">
    <property type="taxonomic scope" value="Eukaryota"/>
</dbReference>
<dbReference type="GeneTree" id="ENSGT01050000244890"/>
<dbReference type="HOGENOM" id="CLU_058671_3_0_1"/>
<dbReference type="InParanoid" id="Q969X1"/>
<dbReference type="OMA" id="FHVADWD"/>
<dbReference type="OrthoDB" id="7933078at2759"/>
<dbReference type="PAN-GO" id="Q969X1">
    <property type="GO annotations" value="4 GO annotations based on evolutionary models"/>
</dbReference>
<dbReference type="PhylomeDB" id="Q969X1"/>
<dbReference type="TreeFam" id="TF319996"/>
<dbReference type="PathwayCommons" id="Q969X1"/>
<dbReference type="Reactome" id="R-HSA-6798695">
    <property type="pathway name" value="Neutrophil degranulation"/>
</dbReference>
<dbReference type="SignaLink" id="Q969X1"/>
<dbReference type="BioGRID-ORCS" id="64114">
    <property type="hits" value="12 hits in 1156 CRISPR screens"/>
</dbReference>
<dbReference type="ChiTaRS" id="TMBIM1">
    <property type="organism name" value="human"/>
</dbReference>
<dbReference type="GenomeRNAi" id="64114"/>
<dbReference type="Pharos" id="Q969X1">
    <property type="development level" value="Tbio"/>
</dbReference>
<dbReference type="PRO" id="PR:Q969X1"/>
<dbReference type="Proteomes" id="UP000005640">
    <property type="component" value="Chromosome 2"/>
</dbReference>
<dbReference type="RNAct" id="Q969X1">
    <property type="molecule type" value="protein"/>
</dbReference>
<dbReference type="Bgee" id="ENSG00000135926">
    <property type="expression patterns" value="Expressed in lower esophagus mucosa and 201 other cell types or tissues"/>
</dbReference>
<dbReference type="ExpressionAtlas" id="Q969X1">
    <property type="expression patterns" value="baseline and differential"/>
</dbReference>
<dbReference type="GO" id="GO:0005783">
    <property type="term" value="C:endoplasmic reticulum"/>
    <property type="evidence" value="ECO:0000318"/>
    <property type="project" value="GO_Central"/>
</dbReference>
<dbReference type="GO" id="GO:0010008">
    <property type="term" value="C:endosome membrane"/>
    <property type="evidence" value="ECO:0000314"/>
    <property type="project" value="UniProtKB"/>
</dbReference>
<dbReference type="GO" id="GO:0070062">
    <property type="term" value="C:extracellular exosome"/>
    <property type="evidence" value="ECO:0007005"/>
    <property type="project" value="UniProtKB"/>
</dbReference>
<dbReference type="GO" id="GO:0005794">
    <property type="term" value="C:Golgi apparatus"/>
    <property type="evidence" value="ECO:0000314"/>
    <property type="project" value="UniProtKB"/>
</dbReference>
<dbReference type="GO" id="GO:0000139">
    <property type="term" value="C:Golgi membrane"/>
    <property type="evidence" value="ECO:0000314"/>
    <property type="project" value="FlyBase"/>
</dbReference>
<dbReference type="GO" id="GO:0043231">
    <property type="term" value="C:intracellular membrane-bounded organelle"/>
    <property type="evidence" value="ECO:0000314"/>
    <property type="project" value="HPA"/>
</dbReference>
<dbReference type="GO" id="GO:0005765">
    <property type="term" value="C:lysosomal membrane"/>
    <property type="evidence" value="ECO:0000314"/>
    <property type="project" value="UniProtKB"/>
</dbReference>
<dbReference type="GO" id="GO:0016020">
    <property type="term" value="C:membrane"/>
    <property type="evidence" value="ECO:0000318"/>
    <property type="project" value="GO_Central"/>
</dbReference>
<dbReference type="GO" id="GO:0005886">
    <property type="term" value="C:plasma membrane"/>
    <property type="evidence" value="ECO:0000304"/>
    <property type="project" value="Reactome"/>
</dbReference>
<dbReference type="GO" id="GO:0035579">
    <property type="term" value="C:specific granule membrane"/>
    <property type="evidence" value="ECO:0000304"/>
    <property type="project" value="Reactome"/>
</dbReference>
<dbReference type="GO" id="GO:0005262">
    <property type="term" value="F:calcium channel activity"/>
    <property type="evidence" value="ECO:0000318"/>
    <property type="project" value="GO_Central"/>
</dbReference>
<dbReference type="GO" id="GO:0005123">
    <property type="term" value="F:death receptor binding"/>
    <property type="evidence" value="ECO:0000314"/>
    <property type="project" value="UniProtKB"/>
</dbReference>
<dbReference type="GO" id="GO:0097190">
    <property type="term" value="P:apoptotic signaling pathway"/>
    <property type="evidence" value="ECO:0000318"/>
    <property type="project" value="GO_Central"/>
</dbReference>
<dbReference type="GO" id="GO:0043086">
    <property type="term" value="P:negative regulation of catalytic activity"/>
    <property type="evidence" value="ECO:0000250"/>
    <property type="project" value="UniProtKB"/>
</dbReference>
<dbReference type="GO" id="GO:1902042">
    <property type="term" value="P:negative regulation of extrinsic apoptotic signaling pathway via death domain receptors"/>
    <property type="evidence" value="ECO:0000315"/>
    <property type="project" value="UniProtKB"/>
</dbReference>
<dbReference type="GO" id="GO:1902045">
    <property type="term" value="P:negative regulation of Fas signaling pathway"/>
    <property type="evidence" value="ECO:0000315"/>
    <property type="project" value="UniProtKB"/>
</dbReference>
<dbReference type="GO" id="GO:0043524">
    <property type="term" value="P:negative regulation of neuron apoptotic process"/>
    <property type="evidence" value="ECO:0000318"/>
    <property type="project" value="GO_Central"/>
</dbReference>
<dbReference type="GO" id="GO:1903077">
    <property type="term" value="P:negative regulation of protein localization to plasma membrane"/>
    <property type="evidence" value="ECO:0000315"/>
    <property type="project" value="UniProtKB"/>
</dbReference>
<dbReference type="GO" id="GO:2000504">
    <property type="term" value="P:positive regulation of blood vessel remodeling"/>
    <property type="evidence" value="ECO:0000250"/>
    <property type="project" value="UniProtKB"/>
</dbReference>
<dbReference type="CDD" id="cd10428">
    <property type="entry name" value="LFG_like"/>
    <property type="match status" value="1"/>
</dbReference>
<dbReference type="InterPro" id="IPR006214">
    <property type="entry name" value="Bax_inhibitor_1-related"/>
</dbReference>
<dbReference type="PANTHER" id="PTHR23291">
    <property type="entry name" value="BAX INHIBITOR-RELATED"/>
    <property type="match status" value="1"/>
</dbReference>
<dbReference type="PANTHER" id="PTHR23291:SF35">
    <property type="entry name" value="PROTEIN LIFEGUARD 3"/>
    <property type="match status" value="1"/>
</dbReference>
<dbReference type="Pfam" id="PF01027">
    <property type="entry name" value="Bax1-I"/>
    <property type="match status" value="1"/>
</dbReference>
<evidence type="ECO:0000250" key="1"/>
<evidence type="ECO:0000250" key="2">
    <source>
        <dbReference type="UniProtKB" id="Q8BJZ3"/>
    </source>
</evidence>
<evidence type="ECO:0000255" key="3"/>
<evidence type="ECO:0000256" key="4">
    <source>
        <dbReference type="SAM" id="MobiDB-lite"/>
    </source>
</evidence>
<evidence type="ECO:0000269" key="5">
    <source>
    </source>
</evidence>
<evidence type="ECO:0000269" key="6">
    <source>
    </source>
</evidence>
<evidence type="ECO:0000269" key="7">
    <source>
    </source>
</evidence>
<evidence type="ECO:0000269" key="8">
    <source>
    </source>
</evidence>
<evidence type="ECO:0000305" key="9"/>
<evidence type="ECO:0007744" key="10">
    <source>
    </source>
</evidence>
<gene>
    <name type="primary">TMBIM1</name>
    <name type="synonym">LFG3</name>
    <name type="synonym">RECS1</name>
    <name type="ORF">PP1201</name>
    <name type="ORF">PSEC0158</name>
</gene>
<reference key="1">
    <citation type="journal article" date="2004" name="Nat. Genet.">
        <title>Complete sequencing and characterization of 21,243 full-length human cDNAs.</title>
        <authorList>
            <person name="Ota T."/>
            <person name="Suzuki Y."/>
            <person name="Nishikawa T."/>
            <person name="Otsuki T."/>
            <person name="Sugiyama T."/>
            <person name="Irie R."/>
            <person name="Wakamatsu A."/>
            <person name="Hayashi K."/>
            <person name="Sato H."/>
            <person name="Nagai K."/>
            <person name="Kimura K."/>
            <person name="Makita H."/>
            <person name="Sekine M."/>
            <person name="Obayashi M."/>
            <person name="Nishi T."/>
            <person name="Shibahara T."/>
            <person name="Tanaka T."/>
            <person name="Ishii S."/>
            <person name="Yamamoto J."/>
            <person name="Saito K."/>
            <person name="Kawai Y."/>
            <person name="Isono Y."/>
            <person name="Nakamura Y."/>
            <person name="Nagahari K."/>
            <person name="Murakami K."/>
            <person name="Yasuda T."/>
            <person name="Iwayanagi T."/>
            <person name="Wagatsuma M."/>
            <person name="Shiratori A."/>
            <person name="Sudo H."/>
            <person name="Hosoiri T."/>
            <person name="Kaku Y."/>
            <person name="Kodaira H."/>
            <person name="Kondo H."/>
            <person name="Sugawara M."/>
            <person name="Takahashi M."/>
            <person name="Kanda K."/>
            <person name="Yokoi T."/>
            <person name="Furuya T."/>
            <person name="Kikkawa E."/>
            <person name="Omura Y."/>
            <person name="Abe K."/>
            <person name="Kamihara K."/>
            <person name="Katsuta N."/>
            <person name="Sato K."/>
            <person name="Tanikawa M."/>
            <person name="Yamazaki M."/>
            <person name="Ninomiya K."/>
            <person name="Ishibashi T."/>
            <person name="Yamashita H."/>
            <person name="Murakawa K."/>
            <person name="Fujimori K."/>
            <person name="Tanai H."/>
            <person name="Kimata M."/>
            <person name="Watanabe M."/>
            <person name="Hiraoka S."/>
            <person name="Chiba Y."/>
            <person name="Ishida S."/>
            <person name="Ono Y."/>
            <person name="Takiguchi S."/>
            <person name="Watanabe S."/>
            <person name="Yosida M."/>
            <person name="Hotuta T."/>
            <person name="Kusano J."/>
            <person name="Kanehori K."/>
            <person name="Takahashi-Fujii A."/>
            <person name="Hara H."/>
            <person name="Tanase T.-O."/>
            <person name="Nomura Y."/>
            <person name="Togiya S."/>
            <person name="Komai F."/>
            <person name="Hara R."/>
            <person name="Takeuchi K."/>
            <person name="Arita M."/>
            <person name="Imose N."/>
            <person name="Musashino K."/>
            <person name="Yuuki H."/>
            <person name="Oshima A."/>
            <person name="Sasaki N."/>
            <person name="Aotsuka S."/>
            <person name="Yoshikawa Y."/>
            <person name="Matsunawa H."/>
            <person name="Ichihara T."/>
            <person name="Shiohata N."/>
            <person name="Sano S."/>
            <person name="Moriya S."/>
            <person name="Momiyama H."/>
            <person name="Satoh N."/>
            <person name="Takami S."/>
            <person name="Terashima Y."/>
            <person name="Suzuki O."/>
            <person name="Nakagawa S."/>
            <person name="Senoh A."/>
            <person name="Mizoguchi H."/>
            <person name="Goto Y."/>
            <person name="Shimizu F."/>
            <person name="Wakebe H."/>
            <person name="Hishigaki H."/>
            <person name="Watanabe T."/>
            <person name="Sugiyama A."/>
            <person name="Takemoto M."/>
            <person name="Kawakami B."/>
            <person name="Yamazaki M."/>
            <person name="Watanabe K."/>
            <person name="Kumagai A."/>
            <person name="Itakura S."/>
            <person name="Fukuzumi Y."/>
            <person name="Fujimori Y."/>
            <person name="Komiyama M."/>
            <person name="Tashiro H."/>
            <person name="Tanigami A."/>
            <person name="Fujiwara T."/>
            <person name="Ono T."/>
            <person name="Yamada K."/>
            <person name="Fujii Y."/>
            <person name="Ozaki K."/>
            <person name="Hirao M."/>
            <person name="Ohmori Y."/>
            <person name="Kawabata A."/>
            <person name="Hikiji T."/>
            <person name="Kobatake N."/>
            <person name="Inagaki H."/>
            <person name="Ikema Y."/>
            <person name="Okamoto S."/>
            <person name="Okitani R."/>
            <person name="Kawakami T."/>
            <person name="Noguchi S."/>
            <person name="Itoh T."/>
            <person name="Shigeta K."/>
            <person name="Senba T."/>
            <person name="Matsumura K."/>
            <person name="Nakajima Y."/>
            <person name="Mizuno T."/>
            <person name="Morinaga M."/>
            <person name="Sasaki M."/>
            <person name="Togashi T."/>
            <person name="Oyama M."/>
            <person name="Hata H."/>
            <person name="Watanabe M."/>
            <person name="Komatsu T."/>
            <person name="Mizushima-Sugano J."/>
            <person name="Satoh T."/>
            <person name="Shirai Y."/>
            <person name="Takahashi Y."/>
            <person name="Nakagawa K."/>
            <person name="Okumura K."/>
            <person name="Nagase T."/>
            <person name="Nomura N."/>
            <person name="Kikuchi H."/>
            <person name="Masuho Y."/>
            <person name="Yamashita R."/>
            <person name="Nakai K."/>
            <person name="Yada T."/>
            <person name="Nakamura Y."/>
            <person name="Ohara O."/>
            <person name="Isogai T."/>
            <person name="Sugano S."/>
        </authorList>
    </citation>
    <scope>NUCLEOTIDE SEQUENCE [LARGE SCALE MRNA]</scope>
    <scope>VARIANT LEU-21</scope>
    <source>
        <tissue>Placenta</tissue>
        <tissue>Tongue</tissue>
    </source>
</reference>
<reference key="2">
    <citation type="journal article" date="2004" name="Proc. Natl. Acad. Sci. U.S.A.">
        <title>Large-scale cDNA transfection screening for genes related to cancer development and progression.</title>
        <authorList>
            <person name="Wan D."/>
            <person name="Gong Y."/>
            <person name="Qin W."/>
            <person name="Zhang P."/>
            <person name="Li J."/>
            <person name="Wei L."/>
            <person name="Zhou X."/>
            <person name="Li H."/>
            <person name="Qiu X."/>
            <person name="Zhong F."/>
            <person name="He L."/>
            <person name="Yu J."/>
            <person name="Yao G."/>
            <person name="Jiang H."/>
            <person name="Qian L."/>
            <person name="Yu Y."/>
            <person name="Shu H."/>
            <person name="Chen X."/>
            <person name="Xu H."/>
            <person name="Guo M."/>
            <person name="Pan Z."/>
            <person name="Chen Y."/>
            <person name="Ge C."/>
            <person name="Yang S."/>
            <person name="Gu J."/>
        </authorList>
    </citation>
    <scope>NUCLEOTIDE SEQUENCE [LARGE SCALE MRNA]</scope>
    <scope>VARIANT LEU-21</scope>
</reference>
<reference key="3">
    <citation type="journal article" date="2005" name="DNA Res.">
        <title>Signal sequence and keyword trap in silico for selection of full-length human cDNAs encoding secretion or membrane proteins from oligo-capped cDNA libraries.</title>
        <authorList>
            <person name="Otsuki T."/>
            <person name="Ota T."/>
            <person name="Nishikawa T."/>
            <person name="Hayashi K."/>
            <person name="Suzuki Y."/>
            <person name="Yamamoto J."/>
            <person name="Wakamatsu A."/>
            <person name="Kimura K."/>
            <person name="Sakamoto K."/>
            <person name="Hatano N."/>
            <person name="Kawai Y."/>
            <person name="Ishii S."/>
            <person name="Saito K."/>
            <person name="Kojima S."/>
            <person name="Sugiyama T."/>
            <person name="Ono T."/>
            <person name="Okano K."/>
            <person name="Yoshikawa Y."/>
            <person name="Aotsuka S."/>
            <person name="Sasaki N."/>
            <person name="Hattori A."/>
            <person name="Okumura K."/>
            <person name="Nagai K."/>
            <person name="Sugano S."/>
            <person name="Isogai T."/>
        </authorList>
    </citation>
    <scope>NUCLEOTIDE SEQUENCE [LARGE SCALE MRNA]</scope>
    <scope>VARIANT LEU-21</scope>
    <source>
        <tissue>Placenta</tissue>
    </source>
</reference>
<reference key="4">
    <citation type="submission" date="2005-07" db="EMBL/GenBank/DDBJ databases">
        <authorList>
            <person name="Mural R.J."/>
            <person name="Istrail S."/>
            <person name="Sutton G.G."/>
            <person name="Florea L."/>
            <person name="Halpern A.L."/>
            <person name="Mobarry C.M."/>
            <person name="Lippert R."/>
            <person name="Walenz B."/>
            <person name="Shatkay H."/>
            <person name="Dew I."/>
            <person name="Miller J.R."/>
            <person name="Flanigan M.J."/>
            <person name="Edwards N.J."/>
            <person name="Bolanos R."/>
            <person name="Fasulo D."/>
            <person name="Halldorsson B.V."/>
            <person name="Hannenhalli S."/>
            <person name="Turner R."/>
            <person name="Yooseph S."/>
            <person name="Lu F."/>
            <person name="Nusskern D.R."/>
            <person name="Shue B.C."/>
            <person name="Zheng X.H."/>
            <person name="Zhong F."/>
            <person name="Delcher A.L."/>
            <person name="Huson D.H."/>
            <person name="Kravitz S.A."/>
            <person name="Mouchard L."/>
            <person name="Reinert K."/>
            <person name="Remington K.A."/>
            <person name="Clark A.G."/>
            <person name="Waterman M.S."/>
            <person name="Eichler E.E."/>
            <person name="Adams M.D."/>
            <person name="Hunkapiller M.W."/>
            <person name="Myers E.W."/>
            <person name="Venter J.C."/>
        </authorList>
    </citation>
    <scope>NUCLEOTIDE SEQUENCE [LARGE SCALE GENOMIC DNA]</scope>
</reference>
<reference key="5">
    <citation type="journal article" date="2004" name="Genome Res.">
        <title>The status, quality, and expansion of the NIH full-length cDNA project: the Mammalian Gene Collection (MGC).</title>
        <authorList>
            <consortium name="The MGC Project Team"/>
        </authorList>
    </citation>
    <scope>NUCLEOTIDE SEQUENCE [LARGE SCALE MRNA]</scope>
    <source>
        <tissue>Brain</tissue>
        <tissue>Colon</tissue>
        <tissue>Pancreas</tissue>
    </source>
</reference>
<reference key="6">
    <citation type="journal article" date="2006" name="Genes Genet. Syst.">
        <title>RECS1 deficiency in mice induces susceptibility to cystic medial degeneration.</title>
        <authorList>
            <person name="Zhao H."/>
            <person name="Ito A."/>
            <person name="Kimura S.H."/>
            <person name="Yabuta N."/>
            <person name="Sakai N."/>
            <person name="Ikawa M."/>
            <person name="Okabe M."/>
            <person name="Matsuzawa Y."/>
            <person name="Yamashita S."/>
            <person name="Nojima H."/>
        </authorList>
    </citation>
    <scope>SUBCELLULAR LOCATION</scope>
</reference>
<reference key="7">
    <citation type="journal article" date="2008" name="J. Proteome Res.">
        <title>Phosphoproteome of resting human platelets.</title>
        <authorList>
            <person name="Zahedi R.P."/>
            <person name="Lewandrowski U."/>
            <person name="Wiesner J."/>
            <person name="Wortelkamp S."/>
            <person name="Moebius J."/>
            <person name="Schuetz C."/>
            <person name="Walter U."/>
            <person name="Gambaryan S."/>
            <person name="Sickmann A."/>
        </authorList>
    </citation>
    <scope>IDENTIFICATION BY MASS SPECTROMETRY [LARGE SCALE ANALYSIS]</scope>
    <source>
        <tissue>Platelet</tissue>
    </source>
</reference>
<reference key="8">
    <citation type="journal article" date="2009" name="Apoptosis">
        <title>LFG: a candidate apoptosis regulatory gene family.</title>
        <authorList>
            <person name="Hu L."/>
            <person name="Smith T.F."/>
            <person name="Goldberger G."/>
        </authorList>
    </citation>
    <scope>GENE FAMILY</scope>
    <scope>NOMENCLATURE</scope>
</reference>
<reference key="9">
    <citation type="journal article" date="2013" name="J. Proteome Res.">
        <title>Toward a comprehensive characterization of a human cancer cell phosphoproteome.</title>
        <authorList>
            <person name="Zhou H."/>
            <person name="Di Palma S."/>
            <person name="Preisinger C."/>
            <person name="Peng M."/>
            <person name="Polat A.N."/>
            <person name="Heck A.J."/>
            <person name="Mohammed S."/>
        </authorList>
    </citation>
    <scope>PHOSPHORYLATION [LARGE SCALE ANALYSIS] AT SER-83</scope>
    <scope>IDENTIFICATION BY MASS SPECTROMETRY [LARGE SCALE ANALYSIS]</scope>
    <source>
        <tissue>Erythroleukemia</tissue>
    </source>
</reference>
<keyword id="KW-0967">Endosome</keyword>
<keyword id="KW-0458">Lysosome</keyword>
<keyword id="KW-0472">Membrane</keyword>
<keyword id="KW-0597">Phosphoprotein</keyword>
<keyword id="KW-1267">Proteomics identification</keyword>
<keyword id="KW-1185">Reference proteome</keyword>
<keyword id="KW-0812">Transmembrane</keyword>
<keyword id="KW-1133">Transmembrane helix</keyword>
<comment type="function">
    <text>Negatively regulates aortic matrix metalloproteinase-9 (MMP9) production and may play a protective role in vascular remodeling.</text>
</comment>
<comment type="interaction">
    <interactant intactId="EBI-2820569">
        <id>Q969X1</id>
    </interactant>
    <interactant intactId="EBI-12934759">
        <id>Q8NCR0</id>
        <label>B3GALNT2</label>
    </interactant>
    <organismsDiffer>false</organismsDiffer>
    <experiments>3</experiments>
</comment>
<comment type="interaction">
    <interactant intactId="EBI-2820569">
        <id>Q969X1</id>
    </interactant>
    <interactant intactId="EBI-700794">
        <id>Q13323</id>
        <label>BIK</label>
    </interactant>
    <organismsDiffer>false</organismsDiffer>
    <experiments>3</experiments>
</comment>
<comment type="interaction">
    <interactant intactId="EBI-2820569">
        <id>Q969X1</id>
    </interactant>
    <interactant intactId="EBI-3906571">
        <id>P20138</id>
        <label>CD33</label>
    </interactant>
    <organismsDiffer>false</organismsDiffer>
    <experiments>3</experiments>
</comment>
<comment type="interaction">
    <interactant intactId="EBI-2820569">
        <id>Q969X1</id>
    </interactant>
    <interactant intactId="EBI-2868927">
        <id>Q6P531</id>
        <label>GGT6</label>
    </interactant>
    <organismsDiffer>false</organismsDiffer>
    <experiments>3</experiments>
</comment>
<comment type="interaction">
    <interactant intactId="EBI-2820569">
        <id>Q969X1</id>
    </interactant>
    <interactant intactId="EBI-13045372">
        <id>Q9HC23</id>
        <label>PROK2</label>
    </interactant>
    <organismsDiffer>false</organismsDiffer>
    <experiments>3</experiments>
</comment>
<comment type="interaction">
    <interactant intactId="EBI-2820569">
        <id>Q969X1</id>
    </interactant>
    <interactant intactId="EBI-12375429">
        <id>Q7Z5B4-5</id>
        <label>RIC3</label>
    </interactant>
    <organismsDiffer>false</organismsDiffer>
    <experiments>3</experiments>
</comment>
<comment type="interaction">
    <interactant intactId="EBI-2820569">
        <id>Q969X1</id>
    </interactant>
    <interactant intactId="EBI-3923031">
        <id>Q14973</id>
        <label>SLC10A1</label>
    </interactant>
    <organismsDiffer>false</organismsDiffer>
    <experiments>3</experiments>
</comment>
<comment type="interaction">
    <interactant intactId="EBI-2820569">
        <id>Q969X1</id>
    </interactant>
    <interactant intactId="EBI-10315004">
        <id>Q9NWH2</id>
        <label>TMEM242</label>
    </interactant>
    <organismsDiffer>false</organismsDiffer>
    <experiments>3</experiments>
</comment>
<comment type="subcellular location">
    <subcellularLocation>
        <location evidence="1">Membrane</location>
        <topology evidence="1">Multi-pass membrane protein</topology>
    </subcellularLocation>
    <subcellularLocation>
        <location evidence="8">Lysosome membrane</location>
    </subcellularLocation>
    <subcellularLocation>
        <location evidence="8">Endosome membrane</location>
    </subcellularLocation>
</comment>
<comment type="similarity">
    <text evidence="9">Belongs to the BI1 family. LFG subfamily.</text>
</comment>
<comment type="sequence caution" evidence="9">
    <conflict type="frameshift">
        <sequence resource="EMBL-CDS" id="AAH26693"/>
    </conflict>
</comment>
<comment type="sequence caution" evidence="9">
    <conflict type="erroneous initiation">
        <sequence resource="EMBL-CDS" id="BAB55346"/>
    </conflict>
    <text>Truncated N-terminus.</text>
</comment>
<comment type="sequence caution" evidence="9">
    <conflict type="erroneous initiation">
        <sequence resource="EMBL-CDS" id="BAC11636"/>
    </conflict>
    <text>Truncated N-terminus.</text>
</comment>
<feature type="chain" id="PRO_0000179090" description="Protein lifeguard 3">
    <location>
        <begin position="1"/>
        <end position="311"/>
    </location>
</feature>
<feature type="transmembrane region" description="Helical" evidence="3">
    <location>
        <begin position="110"/>
        <end position="130"/>
    </location>
</feature>
<feature type="transmembrane region" description="Helical" evidence="3">
    <location>
        <begin position="134"/>
        <end position="154"/>
    </location>
</feature>
<feature type="transmembrane region" description="Helical" evidence="3">
    <location>
        <begin position="165"/>
        <end position="185"/>
    </location>
</feature>
<feature type="transmembrane region" description="Helical" evidence="3">
    <location>
        <begin position="190"/>
        <end position="210"/>
    </location>
</feature>
<feature type="transmembrane region" description="Helical" evidence="3">
    <location>
        <begin position="221"/>
        <end position="241"/>
    </location>
</feature>
<feature type="transmembrane region" description="Helical" evidence="3">
    <location>
        <begin position="246"/>
        <end position="266"/>
    </location>
</feature>
<feature type="transmembrane region" description="Helical" evidence="3">
    <location>
        <begin position="286"/>
        <end position="306"/>
    </location>
</feature>
<feature type="region of interest" description="Disordered" evidence="4">
    <location>
        <begin position="1"/>
        <end position="37"/>
    </location>
</feature>
<feature type="region of interest" description="Disordered" evidence="4">
    <location>
        <begin position="50"/>
        <end position="72"/>
    </location>
</feature>
<feature type="compositionally biased region" description="Pro residues" evidence="4">
    <location>
        <begin position="53"/>
        <end position="62"/>
    </location>
</feature>
<feature type="modified residue" description="Phosphoserine" evidence="2">
    <location>
        <position position="81"/>
    </location>
</feature>
<feature type="modified residue" description="Phosphoserine" evidence="10">
    <location>
        <position position="83"/>
    </location>
</feature>
<feature type="sequence variant" id="VAR_017382" description="In dbSNP:rs2292553." evidence="5 6 7">
    <original>P</original>
    <variation>L</variation>
    <location>
        <position position="21"/>
    </location>
</feature>
<feature type="sequence conflict" description="In Ref. 1; BAC04516." evidence="9" ref="1">
    <original>I</original>
    <variation>T</variation>
    <location>
        <position position="119"/>
    </location>
</feature>
<organism>
    <name type="scientific">Homo sapiens</name>
    <name type="common">Human</name>
    <dbReference type="NCBI Taxonomy" id="9606"/>
    <lineage>
        <taxon>Eukaryota</taxon>
        <taxon>Metazoa</taxon>
        <taxon>Chordata</taxon>
        <taxon>Craniata</taxon>
        <taxon>Vertebrata</taxon>
        <taxon>Euteleostomi</taxon>
        <taxon>Mammalia</taxon>
        <taxon>Eutheria</taxon>
        <taxon>Euarchontoglires</taxon>
        <taxon>Primates</taxon>
        <taxon>Haplorrhini</taxon>
        <taxon>Catarrhini</taxon>
        <taxon>Hominidae</taxon>
        <taxon>Homo</taxon>
    </lineage>
</organism>
<proteinExistence type="evidence at protein level"/>